<comment type="function">
    <text evidence="2 3">Multifunctional transcription factor that induces cell cycle arrest, DNA repair or apoptosis upon binding to its target DNA sequence. Acts as a tumor suppressor in many tumor types; induces growth arrest or apoptosis depending on the physiological circumstances and cell type. Negatively regulates cell division by controlling expression of a set of genes required for this process. One of the activated genes is an inhibitor of cyclin-dependent kinases. Apoptosis induction seems to be mediated either by stimulation of BAX and FAS antigen expression, or by repression of Bcl-2 expression. Its pro-apoptotic activity is activated via its interaction with PPP1R13B/ASPP1 or TP53BP2/ASPP2 (By similarity). However, this activity is inhibited when the interaction with PPP1R13B/ASPP1 or TP53BP2/ASPP2 is displaced by PPP1R13L/iASPP (By similarity). In cooperation with mitochondrial PPIF is involved in activating oxidative stress-induced necrosis; the function is largely independent of transcription. Prevents CDK7 kinase activity when associated to CAK complex in response to DNA damage, thus stopping cell cycle progression. Induces the transcription of long intergenic non-coding RNA p21 (lincRNA-p21) and lincRNA-Mkln1. LincRNA-p21 participates in TP53-dependent transcriptional repression leading to apoptosis and seems to have an effect on cell-cycle regulation. Regulates the circadian clock by repressing CLOCK-BMAL1-mediated transcriptional activation of PER2.</text>
</comment>
<comment type="cofactor">
    <cofactor evidence="1">
        <name>Zn(2+)</name>
        <dbReference type="ChEBI" id="CHEBI:29105"/>
    </cofactor>
    <text evidence="1">Binds 1 zinc ion per subunit.</text>
</comment>
<comment type="subunit">
    <text evidence="2 3 4">Forms homodimers and homotetramers (By similarity). Binds DNA as a homotetramer. Interacts with AXIN1. Probably part of a complex consisting of TP53, HIPK2 and AXIN1. Interacts with histone acetyltransferases EP300 and methyltransferases HRMT1L2 and CARM1, and recruits them to promoters. Interacts (via C-terminus) with TAF1; when TAF1 is part of the TFIID complex. Interacts with ING4; this interaction may be indirect. Found in a complex with CABLES1 and TP73. Interacts with HIPK1, HIPK2, and TP53INP1. Interacts with WWOX. Interacts with USP7 and SYVN1. Interacts with HSP90AB1. Interacts with CHD8; leading to recruit histone H1 and prevent transactivation activity. Interacts with ARMC10, BANP, CDKN2AIP, NUAK1, STK11/LKB1, UHRF2 and E4F. Interacts with YWHAZ; the interaction enhances TP53 transcriptional activity. Phosphorylation of YWHAZ on 'Ser-58' inhibits this interaction. Interacts (via DNA-binding domain) with MAML1 (via N-terminus). Interacts with MKRN1. Interacts with PML (via C-terminus). Interacts with MDM2; leading to ubiquitination and proteasomal degradation of TP53. Directly interacts with FBXO42; leading to ubiquitination and degradation of TP53. Interacts (phosphorylated at Ser-15 by ATM) with the phosphatase PP2A-PPP2R5C holoenzyme; regulates stress-induced TP53-dependent inhibition of cell proliferation. Interacts with PPP2R2A. Interacts with AURKA, DAXX, BRD7 and TRIM24. Interacts (when monomethylated at Lys-373) with L3MBTL1. Interacts with GRK5. Binds to the CAK complex (CDK7, cyclin H and MAT1) in response to DNA damage. Interacts with CDK5 in neurons. Interacts with AURKB, SETD2, UHRF2 and NOC2L. Interacts (via N-terminus) with PTK2/FAK1; this promotes ubiquitination by MDM2. Interacts with PTK2B/PYK2; this promotes ubiquitination by MDM2. Interacts with PRKCG. Interacts with PPIF; the association implicates preferentially tetrameric TP53, is induced by oxidative stress and is impaired by cyclosporin A (CsA). Interacts with SNAI1; the interaction induces SNAI1 degradation via MDM2-mediated ubiquitination and inhibits SNAI1-induced cell invasion. Interacts with UBC9. Interacts with ZNF385B; the interaction is direct. Interacts (via DNA-binding domain) with ZNF385A; the interaction is direct and enhances p53/TP53 transactivation functions on cell-cycle arrest target genes, resulting in growth arrest (By similarity). Interacts with ANKRD2. Interacts with RFFL and RNF34; involved in p53/TP53 ubiquitination. Interacts with MTA1 and COP1. Interacts with CCAR2 (via N-terminus). Interacts with MORC3. Interacts (via C-terminus) with POU4F2 (via C-terminus). Interacts (via oligomerization region) with NOP53; the interaction is direct and may prevent the MDM2-mediated proteasomal degradation of TP53. Interacts with AFG1L; mediates mitochondrial translocation of TP53. Interacts with UBD (By similarity). Interacts with TAF6 (By similarity). Interacts with C10orf90/FATS; the interaction inhibits binding of TP53 and MDM2 (By similarity). Interacts with NUPR1; interaction is stress-dependent. Forms a complex with EP300 and NUPR1; this complex binds CDKN1A promoter leading to transcriptional induction of CDKN1A (By similarity). Interacts with PRMT5 in response to DNA damage; the interaction is TTC5/STRAP dependent (By similarity). Interacts with PPP1R13L (via SH3 domain and ANK repeats); the interaction inhibits pro-apoptotic activity of p53/TP53 (By similarity). Interacts with PPP1R13B/ASPP1 and TP53BP2/ASPP2; the interactions promotes pro-apoptotic activity (By similarity). When phosphorylated at Ser-15, interacts with DDX3X and gamma-tubulin (By similarity). Interacts with KAT7/HBO1; leading to inhibit histone acetyltransferase activity of KAT7/HBO1 (By similarity). Interacts (via N-terminus) with E3 ubiquitin-protein ligase MUL1; the interaction results in ubiquitination of cytoplasmic TP53 at Lys-24 and subsequent proteasomal degradation (By similarity). Interacts with S100A4; this interaction promotes TP53 degradation (By similarity). Interacts with TTC5/STRAP; the interaction may result in increased mitochondrial-dependent apoptosis (By similarity). Interacts with NQO1; this interaction is NADH-dependent, stabilizes TP53 in response to oxidative stress and protects it from ubiquitin-independent degradation by the 20S proteasome (By similarity). Interacts with DAZAP2 at TP53 target gene promoters; the interaction is triggered by DNA damage and leads to modulation of the expression of a subset of TP53 target genes, reducing DNA damage-induced cell death by limiting the expression of cell death-mediating TP53 target genes (By similarity). Interacts (via N-terminus) with ZNF768 (via zinc-finger domains); interaction might be facilitated by TP53 oligomerization state (By similarity). Forms a ternary complex with ALDOB and G6PD; this interaction is direct. ALDOB stabilizes the complex inhibiting G6PD activity and keeping oxidative pentose phosphate metabolism in check. Interacts with HSPA9/MOT-2; the interaction promotes the degradation of TP53 (By similarity). Interacts with FBXO22; this interaction promotes TP53 proteasomal degradation (By similarity).</text>
</comment>
<comment type="interaction">
    <interactant intactId="EBI-10816181">
        <id>P13481</id>
    </interactant>
    <interactant intactId="EBI-9522123">
        <id>A2T3M4</id>
    </interactant>
    <organismsDiffer>true</organismsDiffer>
    <experiments>2</experiments>
</comment>
<comment type="subcellular location">
    <subcellularLocation>
        <location evidence="3">Cytoplasm</location>
    </subcellularLocation>
    <subcellularLocation>
        <location evidence="3">Nucleus</location>
    </subcellularLocation>
    <subcellularLocation>
        <location evidence="3">Nucleus</location>
        <location evidence="3">PML body</location>
    </subcellularLocation>
    <subcellularLocation>
        <location evidence="3">Endoplasmic reticulum</location>
    </subcellularLocation>
    <subcellularLocation>
        <location evidence="3">Mitochondrion matrix</location>
    </subcellularLocation>
    <subcellularLocation>
        <location evidence="3">Cytoplasm</location>
        <location evidence="3">Cytoskeleton</location>
        <location evidence="3">Microtubule organizing center</location>
        <location evidence="3">Centrosome</location>
    </subcellularLocation>
    <text evidence="3">Interaction with BANP promotes nuclear localization. Recruited into PML bodies together with CHEK2. Translocates to mitochondria upon oxidative stress. Translocates to mitochondria in response to mitomycin C treatment (By similarity). Competitive inhibition of TP53 interaction with HSPA9/MOT-2 by UBXN2A results in increased protein abundance and subsequent translocation of TP53 to the nucleus (By similarity).</text>
</comment>
<comment type="domain">
    <text evidence="3">The N-terminal and C-terminal disordered regions undergo liquid-liquid phase separation (LLPS) following homotetramerization and activation. Post-translational modifications, such as phosphorylation or lactylation affect the ability to undergo LLPS.</text>
</comment>
<comment type="domain">
    <text evidence="3">The nuclear export signal acts as a transcriptional repression domain. The TADI and TADII motifs (residues 17 to 25 and 48 to 56) correspond both to 9aaTAD motifs which are transactivation domains present in a large number of yeast and animal transcription factors.</text>
</comment>
<comment type="PTM">
    <text evidence="1 3">Phosphorylation on Ser residues mediates transcriptional activation. Phosphorylation at Ser-9 by HIPK4 increases repression activity on BIRC5 promoter (By similarity). Phosphorylated on Thr-18 by VRK1, which may prevent the interaction with MDM2. Phosphorylated on Ser-20 by CHEK2 in response to DNA damage, which prevents ubiquitination by MDM2. Phosphorylated on Ser-20 by PLK3 in response to reactive oxygen species (ROS), promoting p53/TP53-mediated apoptosis. Phosphorylated on Thr-55 by TAF1 which promotes MDM2-mediated TP53 degradation. Phosphorylated on Ser-33 by CDK7 in a CAK complex in response to DNA damage. Phosphorylated by HIPK1. Phosphorylated on Ser-46 by HIPK2 upon UV irradiation. Phosphorylation on Ser-46 is required for acetylation by CREBBP. Phosphorylated on Ser-392 following UV but not gamma irradiation. Stabilized by CDK5-mediated phosphorylation in response to genotoxic and oxidative stresses at Ser-15, Ser-33 and Ser-46, leading to accumulation of p53/TP53, particularly in the nucleus, thus inducing the transactivation of p53/TP53 target genes. Phosphorylated by DYRK2 at Ser-46 in response to genotoxic stress. Phosphorylated at Ser-315 and Ser-392 by CDK2 in response to DNA-damage (By similarity). Phosphorylation at Ser-15 is required for interaction with DDX3X and gamma-tubulin (By similarity). Phosphorylation at Ser-392 regulates its ability to undergo liquid-liquid phase separation by increasing fluidity of TP53/p53 condensates (By similarity).</text>
</comment>
<comment type="PTM">
    <text evidence="3">Monomethylated at Lys-372 by SETD7, leading to stabilization and increased transcriptional activation. Monomethylated at Lys-370 by SMYD2, leading to decreased DNA-binding activity and subsequent transcriptional regulation activity. Lys-372 monomethylation prevents interaction with SMYD2 and subsequent monomethylation at Lys-370. Dimethylated at Lys-373 by EHMT1 and EHMT2. Monomethylated at Lys-382 by KMT5A, promoting interaction with L3MBTL1 and leading to repress transcriptional activity. Demethylation of dimethylated Lys-370 by KDM1A prevents interaction with TP53BP1 and represses TP53-mediated transcriptional activation (By similarity). Monomethylated at Arg-333 and dimethylated at Arg-335 and Arg-337 by PRMT5; methylation is increased after DNA damage and might possibly affect TP53 target gene specificity (By similarity).</text>
</comment>
<comment type="PTM">
    <text evidence="1">Sumoylated with SUMO1. Sumoylated at Lys-386 by UBC9 (By similarity).</text>
</comment>
<comment type="PTM">
    <text evidence="2 3">Ubiquitinated by MDM2 and SYVN1, which leads to proteasomal degradation. Ubiquitinated by RFWD3, which works in cooperation with MDM2 and may catalyze the formation of short polyubiquitin chains on p53/TP53 that are not targeted to the proteasome. Ubiquitinated by MKRN1, which leads to proteasomal degradation. Deubiquitinated by USP10, leading to stabilize it. Ubiquitinated by TRIM24, RFFL, RNF34 and RNF125, which leads to proteasomal degradation. Ubiquitination by TOPORS induces degradation. Deubiquitination by USP7, leading to stabilize it. Ubiquitinated by COP1, which leads to proteasomal degradation (By similarity). Ubiquitination and subsequent proteasomal degradation is negatively regulated by CCAR2 (By similarity). Polyubiquitinated by C10orf90/FATS, polyubiquitination is 'Lys-48'-linkage independent and non-proteolytic, leading to TP53 stabilization (By similarity). Polyubiquitinated by MUL1 at Lys-24 which leads to proteasomal degradation (By similarity). Deubiquitinated by USP3, leading to stabilization (By similarity). Ubiquitinated by MSL2, promoting its cytoplasmic localization (By similarity). Also ubiquitinated by the SCF(FBXO22)-KDMA4A complex; leading to proteasomal degradation (By similarity).</text>
</comment>
<comment type="PTM">
    <text evidence="3">Acetylation of Lys-382 by CREBBP enhances transcriptional activity. Acetylation of Lys-382 by EP300. Deacetylation of Lys-382 by SIRT1 impairs its ability to induce proapoptotic program and modulate cell senescence. Deacetylation by SIRT2 impairs its ability to induce transcription activation in a AKT-dependent manner. Acetylation at Lys-381 increases stability. Deacetylation at Lys-381 by SIRT6 decreases its stability, thereby regulating cell senescence. Acetylated at Lys-120 by KAT5, KAT6A and KAT8; regulating its ability to induce proapoptotic program.</text>
</comment>
<comment type="PTM">
    <text evidence="3">Lactylation by AARS1 prevents ability to undergo liquid-liquid phase separation (LLPS), thereby inhibiting transcription factor activity.</text>
</comment>
<comment type="disease">
    <text>p53 is found in increased amounts in a wide variety of transformed cells. p53 is frequently mutated or inactivated in many types of cancer.</text>
</comment>
<comment type="similarity">
    <text evidence="6">Belongs to the p53 family.</text>
</comment>
<feature type="chain" id="PRO_0000185697" description="Cellular tumor antigen p53">
    <location>
        <begin position="1"/>
        <end position="393"/>
    </location>
</feature>
<feature type="DNA-binding region" evidence="3">
    <location>
        <begin position="102"/>
        <end position="292"/>
    </location>
</feature>
<feature type="region of interest" description="Interaction with CCAR2" evidence="3">
    <location>
        <begin position="1"/>
        <end position="320"/>
    </location>
</feature>
<feature type="region of interest" description="Interaction with HRMT1L2" evidence="1">
    <location>
        <begin position="1"/>
        <end position="83"/>
    </location>
</feature>
<feature type="region of interest" description="Transcription activation (acidic)">
    <location>
        <begin position="1"/>
        <end position="44"/>
    </location>
</feature>
<feature type="region of interest" description="Disordered" evidence="5">
    <location>
        <begin position="48"/>
        <end position="97"/>
    </location>
</feature>
<feature type="region of interest" description="Interaction with WWOX" evidence="1">
    <location>
        <begin position="66"/>
        <end position="110"/>
    </location>
</feature>
<feature type="region of interest" description="Interaction with HIPK1" evidence="1">
    <location>
        <begin position="100"/>
        <end position="370"/>
    </location>
</feature>
<feature type="region of interest" description="Required for interaction with ZNF385A" evidence="1">
    <location>
        <begin position="100"/>
        <end position="300"/>
    </location>
</feature>
<feature type="region of interest" description="Required for interaction with FBXO42" evidence="1">
    <location>
        <begin position="113"/>
        <end position="236"/>
    </location>
</feature>
<feature type="region of interest" description="Interaction with AXIN1" evidence="1">
    <location>
        <begin position="116"/>
        <end position="292"/>
    </location>
</feature>
<feature type="region of interest" description="Interaction with E4F1" evidence="1">
    <location>
        <begin position="256"/>
        <end position="294"/>
    </location>
</feature>
<feature type="region of interest" description="Interaction with DNA" evidence="1">
    <location>
        <begin position="273"/>
        <end position="280"/>
    </location>
</feature>
<feature type="region of interest" description="Disordered" evidence="5">
    <location>
        <begin position="283"/>
        <end position="325"/>
    </location>
</feature>
<feature type="region of interest" description="Interaction with CARM1" evidence="1">
    <location>
        <begin position="300"/>
        <end position="393"/>
    </location>
</feature>
<feature type="region of interest" description="Interaction with HIPK2" evidence="1">
    <location>
        <begin position="319"/>
        <end position="360"/>
    </location>
</feature>
<feature type="region of interest" description="Oligomerization">
    <location>
        <begin position="325"/>
        <end position="356"/>
    </location>
</feature>
<feature type="region of interest" description="Disordered" evidence="5">
    <location>
        <begin position="352"/>
        <end position="393"/>
    </location>
</feature>
<feature type="region of interest" description="Interaction with USP7" evidence="1">
    <location>
        <begin position="359"/>
        <end position="363"/>
    </location>
</feature>
<feature type="region of interest" description="Basic (repression of DNA-binding)">
    <location>
        <begin position="368"/>
        <end position="387"/>
    </location>
</feature>
<feature type="short sequence motif" description="Bipartite nuclear localization signal" evidence="1">
    <location>
        <begin position="305"/>
        <end position="321"/>
    </location>
</feature>
<feature type="short sequence motif" description="Nuclear export signal" evidence="1">
    <location>
        <begin position="339"/>
        <end position="350"/>
    </location>
</feature>
<feature type="short sequence motif" description="[KR]-[STA]-K motif">
    <location>
        <begin position="370"/>
        <end position="372"/>
    </location>
</feature>
<feature type="compositionally biased region" description="Pro residues" evidence="5">
    <location>
        <begin position="77"/>
        <end position="90"/>
    </location>
</feature>
<feature type="compositionally biased region" description="Basic and acidic residues" evidence="5">
    <location>
        <begin position="283"/>
        <end position="297"/>
    </location>
</feature>
<feature type="compositionally biased region" description="Basic residues" evidence="5">
    <location>
        <begin position="365"/>
        <end position="384"/>
    </location>
</feature>
<feature type="binding site" evidence="3">
    <location>
        <position position="176"/>
    </location>
    <ligand>
        <name>Zn(2+)</name>
        <dbReference type="ChEBI" id="CHEBI:29105"/>
    </ligand>
</feature>
<feature type="binding site" evidence="3">
    <location>
        <position position="179"/>
    </location>
    <ligand>
        <name>Zn(2+)</name>
        <dbReference type="ChEBI" id="CHEBI:29105"/>
    </ligand>
</feature>
<feature type="binding site" evidence="3">
    <location>
        <position position="238"/>
    </location>
    <ligand>
        <name>Zn(2+)</name>
        <dbReference type="ChEBI" id="CHEBI:29105"/>
    </ligand>
</feature>
<feature type="binding site" evidence="3">
    <location>
        <position position="242"/>
    </location>
    <ligand>
        <name>Zn(2+)</name>
        <dbReference type="ChEBI" id="CHEBI:29105"/>
    </ligand>
</feature>
<feature type="site" description="Interaction with DNA" evidence="3">
    <location>
        <position position="120"/>
    </location>
</feature>
<feature type="modified residue" description="Phosphoserine; by HIPK4" evidence="3">
    <location>
        <position position="9"/>
    </location>
</feature>
<feature type="modified residue" description="Phosphoserine; by CDK5, PRPK, AMPK, NUAK1 and ATM" evidence="3">
    <location>
        <position position="15"/>
    </location>
</feature>
<feature type="modified residue" description="Phosphothreonine; by CK1, VRK1 and VRK2" evidence="3">
    <location>
        <position position="18"/>
    </location>
</feature>
<feature type="modified residue" description="Phosphoserine; by CHEK2, CK1 and PLK3" evidence="3">
    <location>
        <position position="20"/>
    </location>
</feature>
<feature type="modified residue" description="Phosphoserine; by CDK5 and CDK7" evidence="3">
    <location>
        <position position="33"/>
    </location>
</feature>
<feature type="modified residue" description="Phosphoserine; by MAPKAPK5" evidence="3">
    <location>
        <position position="37"/>
    </location>
</feature>
<feature type="modified residue" description="Phosphoserine; by CDK5, DYRK2, HIPK2 and PKC/PRKCG" evidence="3">
    <location>
        <position position="46"/>
    </location>
</feature>
<feature type="modified residue" description="Phosphothreonine; by TAF1" evidence="1">
    <location>
        <position position="55"/>
    </location>
</feature>
<feature type="modified residue" description="Phosphothreonine; by TAF1 and GRK5" evidence="1">
    <location>
        <position position="55"/>
    </location>
</feature>
<feature type="modified residue" description="N6-acetyllysine" evidence="3">
    <location>
        <position position="120"/>
    </location>
</feature>
<feature type="modified residue" description="N6-lactoyllysine" evidence="3">
    <location>
        <position position="120"/>
    </location>
</feature>
<feature type="modified residue" description="N6-lactoyllysine" evidence="3">
    <location>
        <position position="139"/>
    </location>
</feature>
<feature type="modified residue" description="Phosphoserine; by AURKB" evidence="3">
    <location>
        <position position="183"/>
    </location>
</feature>
<feature type="modified residue" description="Phosphoserine; by AURKB" evidence="3">
    <location>
        <position position="269"/>
    </location>
</feature>
<feature type="modified residue" description="Phosphothreonine; by AURKB" evidence="3">
    <location>
        <position position="284"/>
    </location>
</feature>
<feature type="modified residue" description="N6-acetyllysine" evidence="3">
    <location>
        <position position="305"/>
    </location>
</feature>
<feature type="modified residue" description="Phosphoserine; by AURKA, CDK1 and CDK2" evidence="3">
    <location>
        <position position="315"/>
    </location>
</feature>
<feature type="modified residue" description="N6-acetyllysine" evidence="2">
    <location>
        <position position="321"/>
    </location>
</feature>
<feature type="modified residue" description="Omega-N-methylarginine" evidence="3">
    <location>
        <position position="333"/>
    </location>
</feature>
<feature type="modified residue" description="Symmetric dimethylarginine" evidence="3">
    <location>
        <position position="335"/>
    </location>
</feature>
<feature type="modified residue" description="Symmetric dimethylarginine" evidence="3">
    <location>
        <position position="337"/>
    </location>
</feature>
<feature type="modified residue" description="N6,N6-dimethyllysine; alternate" evidence="3">
    <location>
        <position position="370"/>
    </location>
</feature>
<feature type="modified residue" description="N6-methyllysine; by SMYD2; alternate" evidence="3">
    <location>
        <position position="370"/>
    </location>
</feature>
<feature type="modified residue" description="N6-methyllysine; by SETD7" evidence="3">
    <location>
        <position position="372"/>
    </location>
</feature>
<feature type="modified residue" description="N6,N6-dimethyllysine; by EHMT1 and EHMT2; alternate" evidence="3">
    <location>
        <position position="373"/>
    </location>
</feature>
<feature type="modified residue" description="N6-acetyllysine; alternate" evidence="3">
    <location>
        <position position="373"/>
    </location>
</feature>
<feature type="modified residue" description="N6-acetyllysine" evidence="3">
    <location>
        <position position="381"/>
    </location>
</feature>
<feature type="modified residue" description="N6,N6-dimethyllysine; alternate" evidence="3">
    <location>
        <position position="382"/>
    </location>
</feature>
<feature type="modified residue" description="N6-acetyllysine; alternate" evidence="3">
    <location>
        <position position="382"/>
    </location>
</feature>
<feature type="modified residue" description="N6-methyllysine; by KMT5A; alternate" evidence="3">
    <location>
        <position position="382"/>
    </location>
</feature>
<feature type="modified residue" description="Phosphoserine; by CK2, CDK2 and NUAK1" evidence="3">
    <location>
        <position position="392"/>
    </location>
</feature>
<feature type="cross-link" description="Glycyl lysine isopeptide (Lys-Gly) (interchain with G-Cter in ubiquitin)" evidence="3">
    <location>
        <position position="24"/>
    </location>
</feature>
<feature type="cross-link" description="Glycyl lysine isopeptide (Lys-Gly) (interchain with G-Cter in ubiquitin)" evidence="3">
    <location>
        <position position="291"/>
    </location>
</feature>
<feature type="cross-link" description="Glycyl lysine isopeptide (Lys-Gly) (interchain with G-Cter in ubiquitin)" evidence="3">
    <location>
        <position position="292"/>
    </location>
</feature>
<feature type="cross-link" description="Glycyl lysine isopeptide (Lys-Gly) (interchain with G-Cter in ubiquitin)" evidence="3">
    <location>
        <position position="351"/>
    </location>
</feature>
<feature type="cross-link" description="Glycyl lysine isopeptide (Lys-Gly) (interchain with G-Cter in ubiquitin)" evidence="3">
    <location>
        <position position="357"/>
    </location>
</feature>
<feature type="cross-link" description="Glycyl lysine isopeptide (Lys-Gly) (interchain with G-Cter in SUMO)" evidence="1">
    <location>
        <position position="386"/>
    </location>
</feature>
<name>P53_CHLAE</name>
<proteinExistence type="evidence at protein level"/>
<keyword id="KW-0007">Acetylation</keyword>
<keyword id="KW-0010">Activator</keyword>
<keyword id="KW-0053">Apoptosis</keyword>
<keyword id="KW-0090">Biological rhythms</keyword>
<keyword id="KW-0131">Cell cycle</keyword>
<keyword id="KW-0963">Cytoplasm</keyword>
<keyword id="KW-0206">Cytoskeleton</keyword>
<keyword id="KW-0238">DNA-binding</keyword>
<keyword id="KW-0256">Endoplasmic reticulum</keyword>
<keyword id="KW-1017">Isopeptide bond</keyword>
<keyword id="KW-0479">Metal-binding</keyword>
<keyword id="KW-0488">Methylation</keyword>
<keyword id="KW-0496">Mitochondrion</keyword>
<keyword id="KW-1210">Necrosis</keyword>
<keyword id="KW-0539">Nucleus</keyword>
<keyword id="KW-0597">Phosphoprotein</keyword>
<keyword id="KW-0678">Repressor</keyword>
<keyword id="KW-0804">Transcription</keyword>
<keyword id="KW-0805">Transcription regulation</keyword>
<keyword id="KW-0043">Tumor suppressor</keyword>
<keyword id="KW-0832">Ubl conjugation</keyword>
<keyword id="KW-0862">Zinc</keyword>
<evidence type="ECO:0000250" key="1"/>
<evidence type="ECO:0000250" key="2">
    <source>
        <dbReference type="UniProtKB" id="P02340"/>
    </source>
</evidence>
<evidence type="ECO:0000250" key="3">
    <source>
        <dbReference type="UniProtKB" id="P04637"/>
    </source>
</evidence>
<evidence type="ECO:0000250" key="4">
    <source>
        <dbReference type="UniProtKB" id="P10361"/>
    </source>
</evidence>
<evidence type="ECO:0000256" key="5">
    <source>
        <dbReference type="SAM" id="MobiDB-lite"/>
    </source>
</evidence>
<evidence type="ECO:0000305" key="6"/>
<gene>
    <name type="primary">TP53</name>
</gene>
<protein>
    <recommendedName>
        <fullName>Cellular tumor antigen p53</fullName>
    </recommendedName>
    <alternativeName>
        <fullName>Tumor suppressor p53</fullName>
    </alternativeName>
</protein>
<reference key="1">
    <citation type="journal article" date="1989" name="Nucleic Acids Res.">
        <title>Nucleotide sequence of a cDNA encoding the monkey cellular phosphoprotein p53.</title>
        <authorList>
            <person name="Rigaudy P."/>
            <person name="Eckhardt W."/>
        </authorList>
    </citation>
    <scope>NUCLEOTIDE SEQUENCE [MRNA]</scope>
    <source>
        <tissue>Liver</tissue>
    </source>
</reference>
<accession>P13481</accession>
<organism>
    <name type="scientific">Chlorocebus aethiops</name>
    <name type="common">Green monkey</name>
    <name type="synonym">Cercopithecus aethiops</name>
    <dbReference type="NCBI Taxonomy" id="9534"/>
    <lineage>
        <taxon>Eukaryota</taxon>
        <taxon>Metazoa</taxon>
        <taxon>Chordata</taxon>
        <taxon>Craniata</taxon>
        <taxon>Vertebrata</taxon>
        <taxon>Euteleostomi</taxon>
        <taxon>Mammalia</taxon>
        <taxon>Eutheria</taxon>
        <taxon>Euarchontoglires</taxon>
        <taxon>Primates</taxon>
        <taxon>Haplorrhini</taxon>
        <taxon>Catarrhini</taxon>
        <taxon>Cercopithecidae</taxon>
        <taxon>Cercopithecinae</taxon>
        <taxon>Chlorocebus</taxon>
    </lineage>
</organism>
<dbReference type="EMBL" id="X16384">
    <property type="protein sequence ID" value="CAA34420.1"/>
    <property type="molecule type" value="mRNA"/>
</dbReference>
<dbReference type="PIR" id="S06594">
    <property type="entry name" value="S06594"/>
</dbReference>
<dbReference type="BMRB" id="P13481"/>
<dbReference type="SMR" id="P13481"/>
<dbReference type="IntAct" id="P13481">
    <property type="interactions" value="1"/>
</dbReference>
<dbReference type="MINT" id="P13481"/>
<dbReference type="iPTMnet" id="P13481"/>
<dbReference type="GO" id="GO:0005813">
    <property type="term" value="C:centrosome"/>
    <property type="evidence" value="ECO:0000250"/>
    <property type="project" value="UniProtKB"/>
</dbReference>
<dbReference type="GO" id="GO:0005737">
    <property type="term" value="C:cytoplasm"/>
    <property type="evidence" value="ECO:0000250"/>
    <property type="project" value="UniProtKB"/>
</dbReference>
<dbReference type="GO" id="GO:0005783">
    <property type="term" value="C:endoplasmic reticulum"/>
    <property type="evidence" value="ECO:0007669"/>
    <property type="project" value="UniProtKB-SubCell"/>
</dbReference>
<dbReference type="GO" id="GO:0005759">
    <property type="term" value="C:mitochondrial matrix"/>
    <property type="evidence" value="ECO:0007669"/>
    <property type="project" value="UniProtKB-SubCell"/>
</dbReference>
<dbReference type="GO" id="GO:0005739">
    <property type="term" value="C:mitochondrion"/>
    <property type="evidence" value="ECO:0000250"/>
    <property type="project" value="UniProtKB"/>
</dbReference>
<dbReference type="GO" id="GO:0005730">
    <property type="term" value="C:nucleolus"/>
    <property type="evidence" value="ECO:0000250"/>
    <property type="project" value="UniProtKB"/>
</dbReference>
<dbReference type="GO" id="GO:0005634">
    <property type="term" value="C:nucleus"/>
    <property type="evidence" value="ECO:0000250"/>
    <property type="project" value="UniProtKB"/>
</dbReference>
<dbReference type="GO" id="GO:0016605">
    <property type="term" value="C:PML body"/>
    <property type="evidence" value="ECO:0007669"/>
    <property type="project" value="UniProtKB-SubCell"/>
</dbReference>
<dbReference type="GO" id="GO:0036310">
    <property type="term" value="F:ATP-dependent DNA/DNA annealing activity"/>
    <property type="evidence" value="ECO:0000250"/>
    <property type="project" value="UniProtKB"/>
</dbReference>
<dbReference type="GO" id="GO:0005507">
    <property type="term" value="F:copper ion binding"/>
    <property type="evidence" value="ECO:0000250"/>
    <property type="project" value="UniProtKB"/>
</dbReference>
<dbReference type="GO" id="GO:0003677">
    <property type="term" value="F:DNA binding"/>
    <property type="evidence" value="ECO:0000250"/>
    <property type="project" value="UniProtKB"/>
</dbReference>
<dbReference type="GO" id="GO:0000981">
    <property type="term" value="F:DNA-binding transcription factor activity, RNA polymerase II-specific"/>
    <property type="evidence" value="ECO:0000250"/>
    <property type="project" value="UniProtKB"/>
</dbReference>
<dbReference type="GO" id="GO:0140693">
    <property type="term" value="F:molecular condensate scaffold activity"/>
    <property type="evidence" value="ECO:0000250"/>
    <property type="project" value="UniProtKB"/>
</dbReference>
<dbReference type="GO" id="GO:1990841">
    <property type="term" value="F:promoter-specific chromatin binding"/>
    <property type="evidence" value="ECO:0000250"/>
    <property type="project" value="UniProtKB"/>
</dbReference>
<dbReference type="GO" id="GO:0000978">
    <property type="term" value="F:RNA polymerase II cis-regulatory region sequence-specific DNA binding"/>
    <property type="evidence" value="ECO:0000250"/>
    <property type="project" value="UniProtKB"/>
</dbReference>
<dbReference type="GO" id="GO:0090398">
    <property type="term" value="P:cellular senescence"/>
    <property type="evidence" value="ECO:0000250"/>
    <property type="project" value="UniProtKB"/>
</dbReference>
<dbReference type="GO" id="GO:0048512">
    <property type="term" value="P:circadian behavior"/>
    <property type="evidence" value="ECO:0000250"/>
    <property type="project" value="UniProtKB"/>
</dbReference>
<dbReference type="GO" id="GO:0006974">
    <property type="term" value="P:DNA damage response"/>
    <property type="evidence" value="ECO:0000250"/>
    <property type="project" value="UniProtKB"/>
</dbReference>
<dbReference type="GO" id="GO:0043153">
    <property type="term" value="P:entrainment of circadian clock by photoperiod"/>
    <property type="evidence" value="ECO:0000250"/>
    <property type="project" value="UniProtKB"/>
</dbReference>
<dbReference type="GO" id="GO:0030308">
    <property type="term" value="P:negative regulation of cell growth"/>
    <property type="evidence" value="ECO:0000250"/>
    <property type="project" value="UniProtKB"/>
</dbReference>
<dbReference type="GO" id="GO:0045892">
    <property type="term" value="P:negative regulation of DNA-templated transcription"/>
    <property type="evidence" value="ECO:0000250"/>
    <property type="project" value="UniProtKB"/>
</dbReference>
<dbReference type="GO" id="GO:0006289">
    <property type="term" value="P:nucleotide-excision repair"/>
    <property type="evidence" value="ECO:0000250"/>
    <property type="project" value="UniProtKB"/>
</dbReference>
<dbReference type="GO" id="GO:0097252">
    <property type="term" value="P:oligodendrocyte apoptotic process"/>
    <property type="evidence" value="ECO:0000250"/>
    <property type="project" value="UniProtKB"/>
</dbReference>
<dbReference type="GO" id="GO:0043065">
    <property type="term" value="P:positive regulation of apoptotic process"/>
    <property type="evidence" value="ECO:0000250"/>
    <property type="project" value="UniProtKB"/>
</dbReference>
<dbReference type="GO" id="GO:2001244">
    <property type="term" value="P:positive regulation of intrinsic apoptotic signaling pathway"/>
    <property type="evidence" value="ECO:0000250"/>
    <property type="project" value="UniProtKB"/>
</dbReference>
<dbReference type="GO" id="GO:0045944">
    <property type="term" value="P:positive regulation of transcription by RNA polymerase II"/>
    <property type="evidence" value="ECO:0000250"/>
    <property type="project" value="UniProtKB"/>
</dbReference>
<dbReference type="GO" id="GO:0051262">
    <property type="term" value="P:protein tetramerization"/>
    <property type="evidence" value="ECO:0007669"/>
    <property type="project" value="InterPro"/>
</dbReference>
<dbReference type="CDD" id="cd08367">
    <property type="entry name" value="P53"/>
    <property type="match status" value="1"/>
</dbReference>
<dbReference type="FunFam" id="2.60.40.720:FF:000003">
    <property type="entry name" value="Cellular tumor antigen p53"/>
    <property type="match status" value="1"/>
</dbReference>
<dbReference type="FunFam" id="4.10.170.10:FF:000003">
    <property type="entry name" value="Cellular tumor antigen p53"/>
    <property type="match status" value="1"/>
</dbReference>
<dbReference type="Gene3D" id="2.60.40.720">
    <property type="match status" value="1"/>
</dbReference>
<dbReference type="Gene3D" id="6.10.50.20">
    <property type="match status" value="1"/>
</dbReference>
<dbReference type="Gene3D" id="4.10.170.10">
    <property type="entry name" value="p53-like tetramerisation domain"/>
    <property type="match status" value="1"/>
</dbReference>
<dbReference type="InterPro" id="IPR008967">
    <property type="entry name" value="p53-like_TF_DNA-bd_sf"/>
</dbReference>
<dbReference type="InterPro" id="IPR012346">
    <property type="entry name" value="p53/RUNT-type_TF_DNA-bd_sf"/>
</dbReference>
<dbReference type="InterPro" id="IPR011615">
    <property type="entry name" value="p53_DNA-bd"/>
</dbReference>
<dbReference type="InterPro" id="IPR040926">
    <property type="entry name" value="p53_TAD2"/>
</dbReference>
<dbReference type="InterPro" id="IPR036674">
    <property type="entry name" value="p53_tetramer_sf"/>
</dbReference>
<dbReference type="InterPro" id="IPR010991">
    <property type="entry name" value="p53_tetrameristn"/>
</dbReference>
<dbReference type="InterPro" id="IPR013872">
    <property type="entry name" value="p53_transactivation_domain"/>
</dbReference>
<dbReference type="InterPro" id="IPR002117">
    <property type="entry name" value="p53_tumour_suppressor"/>
</dbReference>
<dbReference type="PANTHER" id="PTHR11447">
    <property type="entry name" value="CELLULAR TUMOR ANTIGEN P53"/>
    <property type="match status" value="1"/>
</dbReference>
<dbReference type="PANTHER" id="PTHR11447:SF6">
    <property type="entry name" value="CELLULAR TUMOR ANTIGEN P53"/>
    <property type="match status" value="1"/>
</dbReference>
<dbReference type="Pfam" id="PF00870">
    <property type="entry name" value="P53"/>
    <property type="match status" value="1"/>
</dbReference>
<dbReference type="Pfam" id="PF08563">
    <property type="entry name" value="P53_TAD"/>
    <property type="match status" value="1"/>
</dbReference>
<dbReference type="Pfam" id="PF07710">
    <property type="entry name" value="P53_tetramer"/>
    <property type="match status" value="1"/>
</dbReference>
<dbReference type="Pfam" id="PF18521">
    <property type="entry name" value="TAD2"/>
    <property type="match status" value="1"/>
</dbReference>
<dbReference type="PRINTS" id="PR00386">
    <property type="entry name" value="P53SUPPRESSR"/>
</dbReference>
<dbReference type="SUPFAM" id="SSF47719">
    <property type="entry name" value="p53 tetramerization domain"/>
    <property type="match status" value="1"/>
</dbReference>
<dbReference type="SUPFAM" id="SSF49417">
    <property type="entry name" value="p53-like transcription factors"/>
    <property type="match status" value="1"/>
</dbReference>
<dbReference type="PROSITE" id="PS00348">
    <property type="entry name" value="P53"/>
    <property type="match status" value="1"/>
</dbReference>
<sequence length="393" mass="43696">MEEPQSDPSIEPPLSQETFSDLWKLLPENNVLSPLPSQAVDDLMLSPDDLAQWLTEDPGPDEAPRMSEAAPHMAPTPAAPTPAAPAPAPSWPLSSSVPSQKTYHGSYGFRLGFLHSGTAKSVTCTYSPDLNKMFCQLAKTCPVQLWVDSTPPPGSRVRAMAIYKQSQHMTEVVRRCPHHERCSDSDGLAPPQHLIRVEGNLRVEYSDDRNTFRHSVVVPYEPPEVGSDCTTIHYNYMCNSSCMGGMNRRPILTIITLEDSSGNLLGRNSFEVRVCACPGRDRRTEEENFRKKGEPCHELPPGSTKRALPNNTSSSPQPKKKPLDGEYFTLQIRGRERFEMFRELNEALELKDAQAGKEPAGSRAHSSHLKSKKGQSTSRHKKFMFKTEGPDSD</sequence>